<protein>
    <recommendedName>
        <fullName evidence="2">F420H(2)-dependent quinone reductase MT1609</fullName>
        <shortName evidence="2">Fqr</shortName>
        <ecNumber evidence="2">1.1.98.-</ecNumber>
    </recommendedName>
</protein>
<reference key="1">
    <citation type="journal article" date="2002" name="J. Bacteriol.">
        <title>Whole-genome comparison of Mycobacterium tuberculosis clinical and laboratory strains.</title>
        <authorList>
            <person name="Fleischmann R.D."/>
            <person name="Alland D."/>
            <person name="Eisen J.A."/>
            <person name="Carpenter L."/>
            <person name="White O."/>
            <person name="Peterson J.D."/>
            <person name="DeBoy R.T."/>
            <person name="Dodson R.J."/>
            <person name="Gwinn M.L."/>
            <person name="Haft D.H."/>
            <person name="Hickey E.K."/>
            <person name="Kolonay J.F."/>
            <person name="Nelson W.C."/>
            <person name="Umayam L.A."/>
            <person name="Ermolaeva M.D."/>
            <person name="Salzberg S.L."/>
            <person name="Delcher A."/>
            <person name="Utterback T.R."/>
            <person name="Weidman J.F."/>
            <person name="Khouri H.M."/>
            <person name="Gill J."/>
            <person name="Mikula A."/>
            <person name="Bishai W."/>
            <person name="Jacobs W.R. Jr."/>
            <person name="Venter J.C."/>
            <person name="Fraser C.M."/>
        </authorList>
    </citation>
    <scope>NUCLEOTIDE SEQUENCE [LARGE SCALE GENOMIC DNA]</scope>
    <source>
        <strain>CDC 1551 / Oshkosh</strain>
    </source>
</reference>
<evidence type="ECO:0000250" key="1"/>
<evidence type="ECO:0000250" key="2">
    <source>
        <dbReference type="UniProtKB" id="P9WP11"/>
    </source>
</evidence>
<evidence type="ECO:0000250" key="3">
    <source>
        <dbReference type="UniProtKB" id="P9WP15"/>
    </source>
</evidence>
<evidence type="ECO:0000305" key="4"/>
<dbReference type="EC" id="1.1.98.-" evidence="2"/>
<dbReference type="EMBL" id="AE000516">
    <property type="protein sequence ID" value="AAK45876.1"/>
    <property type="molecule type" value="Genomic_DNA"/>
</dbReference>
<dbReference type="PIR" id="C70763">
    <property type="entry name" value="C70763"/>
</dbReference>
<dbReference type="RefSeq" id="WP_003407780.1">
    <property type="nucleotide sequence ID" value="NZ_KK341227.1"/>
</dbReference>
<dbReference type="SMR" id="P9WP10"/>
<dbReference type="KEGG" id="mtc:MT1609"/>
<dbReference type="PATRIC" id="fig|83331.31.peg.1731"/>
<dbReference type="HOGENOM" id="CLU_114921_1_0_11"/>
<dbReference type="Proteomes" id="UP000001020">
    <property type="component" value="Chromosome"/>
</dbReference>
<dbReference type="GO" id="GO:0005886">
    <property type="term" value="C:plasma membrane"/>
    <property type="evidence" value="ECO:0007669"/>
    <property type="project" value="UniProtKB-SubCell"/>
</dbReference>
<dbReference type="GO" id="GO:0070967">
    <property type="term" value="F:coenzyme F420 binding"/>
    <property type="evidence" value="ECO:0007669"/>
    <property type="project" value="TreeGrafter"/>
</dbReference>
<dbReference type="GO" id="GO:0016491">
    <property type="term" value="F:oxidoreductase activity"/>
    <property type="evidence" value="ECO:0007669"/>
    <property type="project" value="UniProtKB-KW"/>
</dbReference>
<dbReference type="FunFam" id="2.30.110.10:FF:000018">
    <property type="entry name" value="Deazaflavin-dependent oxidoreductase, nitroreductase family"/>
    <property type="match status" value="1"/>
</dbReference>
<dbReference type="Gene3D" id="2.30.110.10">
    <property type="entry name" value="Electron Transport, Fmn-binding Protein, Chain A"/>
    <property type="match status" value="1"/>
</dbReference>
<dbReference type="InterPro" id="IPR004378">
    <property type="entry name" value="F420H2_quin_Rdtase"/>
</dbReference>
<dbReference type="InterPro" id="IPR012349">
    <property type="entry name" value="Split_barrel_FMN-bd"/>
</dbReference>
<dbReference type="NCBIfam" id="TIGR00026">
    <property type="entry name" value="hi_GC_TIGR00026"/>
    <property type="match status" value="1"/>
</dbReference>
<dbReference type="PANTHER" id="PTHR39428:SF3">
    <property type="entry name" value="DEAZAFLAVIN-DEPENDENT NITROREDUCTASE"/>
    <property type="match status" value="1"/>
</dbReference>
<dbReference type="PANTHER" id="PTHR39428">
    <property type="entry name" value="F420H(2)-DEPENDENT QUINONE REDUCTASE RV1261C"/>
    <property type="match status" value="1"/>
</dbReference>
<dbReference type="Pfam" id="PF04075">
    <property type="entry name" value="F420H2_quin_red"/>
    <property type="match status" value="1"/>
</dbReference>
<dbReference type="SUPFAM" id="SSF50475">
    <property type="entry name" value="FMN-binding split barrel"/>
    <property type="match status" value="1"/>
</dbReference>
<name>FQR58_MYCTO</name>
<gene>
    <name type="ordered locus">MT1609</name>
</gene>
<proteinExistence type="inferred from homology"/>
<sequence>MPLSGEYAPSPLDWSREQADTYMKSGGTEGTQLQGKPVILLTTVGAKTGKLRKTPLMRVEHDGQYAIVASLGGAPKNPVWYHNVVKNPRVELQDGTVTGDYDAREVFGDEKAIWWQRAVAVWPDYASYQTKTDRQIPVFVLTPVRAGG</sequence>
<keyword id="KW-1003">Cell membrane</keyword>
<keyword id="KW-0472">Membrane</keyword>
<keyword id="KW-0560">Oxidoreductase</keyword>
<keyword id="KW-1185">Reference proteome</keyword>
<feature type="initiator methionine" description="Removed" evidence="1">
    <location>
        <position position="1"/>
    </location>
</feature>
<feature type="chain" id="PRO_0000427033" description="F420H(2)-dependent quinone reductase MT1609">
    <location>
        <begin position="2"/>
        <end position="148"/>
    </location>
</feature>
<feature type="binding site" evidence="3">
    <location>
        <begin position="46"/>
        <end position="48"/>
    </location>
    <ligand>
        <name>coenzyme F420-(gamma-Glu)n</name>
        <dbReference type="ChEBI" id="CHEBI:133980"/>
    </ligand>
</feature>
<feature type="binding site" evidence="3">
    <location>
        <begin position="52"/>
        <end position="57"/>
    </location>
    <ligand>
        <name>coenzyme F420-(gamma-Glu)n</name>
        <dbReference type="ChEBI" id="CHEBI:133980"/>
    </ligand>
</feature>
<feature type="binding site" evidence="3">
    <location>
        <begin position="68"/>
        <end position="71"/>
    </location>
    <ligand>
        <name>coenzyme F420-(gamma-Glu)n</name>
        <dbReference type="ChEBI" id="CHEBI:133980"/>
    </ligand>
</feature>
<feature type="binding site" evidence="3">
    <location>
        <begin position="79"/>
        <end position="83"/>
    </location>
    <ligand>
        <name>coenzyme F420-(gamma-Glu)n</name>
        <dbReference type="ChEBI" id="CHEBI:133980"/>
    </ligand>
</feature>
<feature type="binding site" evidence="3">
    <location>
        <position position="125"/>
    </location>
    <ligand>
        <name>coenzyme F420-(gamma-Glu)n</name>
        <dbReference type="ChEBI" id="CHEBI:133980"/>
    </ligand>
</feature>
<comment type="function">
    <text evidence="2">Involved in a F420-dependent anti-oxidant mechanism that protects M.tuberculosis against oxidative stress and bactericidal agents. Catalyzes the F420H(2)-dependent two-electron reduction of quinones to dihydroquinones, thereby preventing the formation of cytotoxic semiquinones obtained by the one-electron reduction pathway. In vitro, catalyzes the reduction of menadione to menadiol; since menaquinone is the sole quinone electron carrier in the respiratory chain in M.tuberculosis, the physiological electron acceptor for Fqr-mediated F420H(2) oxidation is therefore likely to be the endogenous menaquinone found in the membrane fraction of M.tuberculosis.</text>
</comment>
<comment type="catalytic activity">
    <reaction evidence="2">
        <text>oxidized coenzyme F420-(gamma-L-Glu)(n) + a quinol + H(+) = reduced coenzyme F420-(gamma-L-Glu)(n) + a quinone</text>
        <dbReference type="Rhea" id="RHEA:39663"/>
        <dbReference type="Rhea" id="RHEA-COMP:12939"/>
        <dbReference type="Rhea" id="RHEA-COMP:14378"/>
        <dbReference type="ChEBI" id="CHEBI:15378"/>
        <dbReference type="ChEBI" id="CHEBI:24646"/>
        <dbReference type="ChEBI" id="CHEBI:132124"/>
        <dbReference type="ChEBI" id="CHEBI:133980"/>
        <dbReference type="ChEBI" id="CHEBI:139511"/>
    </reaction>
</comment>
<comment type="subcellular location">
    <subcellularLocation>
        <location evidence="3">Cell membrane</location>
        <topology evidence="3">Peripheral membrane protein</topology>
    </subcellularLocation>
</comment>
<comment type="similarity">
    <text evidence="4">Belongs to the F420H(2)-dependent quinone reductase family.</text>
</comment>
<accession>P9WP10</accession>
<accession>L0T770</accession>
<accession>P64875</accession>
<accession>Q10772</accession>
<organism>
    <name type="scientific">Mycobacterium tuberculosis (strain CDC 1551 / Oshkosh)</name>
    <dbReference type="NCBI Taxonomy" id="83331"/>
    <lineage>
        <taxon>Bacteria</taxon>
        <taxon>Bacillati</taxon>
        <taxon>Actinomycetota</taxon>
        <taxon>Actinomycetes</taxon>
        <taxon>Mycobacteriales</taxon>
        <taxon>Mycobacteriaceae</taxon>
        <taxon>Mycobacterium</taxon>
        <taxon>Mycobacterium tuberculosis complex</taxon>
    </lineage>
</organism>